<feature type="chain" id="PRO_0000258917" description="Oxygen-dependent choline dehydrogenase">
    <location>
        <begin position="1"/>
        <end position="566"/>
    </location>
</feature>
<feature type="region of interest" description="Disordered" evidence="2">
    <location>
        <begin position="180"/>
        <end position="202"/>
    </location>
</feature>
<feature type="active site" description="Proton acceptor" evidence="1">
    <location>
        <position position="474"/>
    </location>
</feature>
<feature type="binding site" evidence="1">
    <location>
        <begin position="7"/>
        <end position="36"/>
    </location>
    <ligand>
        <name>FAD</name>
        <dbReference type="ChEBI" id="CHEBI:57692"/>
    </ligand>
</feature>
<dbReference type="EC" id="1.1.99.1" evidence="1"/>
<dbReference type="EC" id="1.2.1.8" evidence="1"/>
<dbReference type="EMBL" id="CP000379">
    <property type="protein sequence ID" value="ABF78163.1"/>
    <property type="molecule type" value="Genomic_DNA"/>
</dbReference>
<dbReference type="SMR" id="Q1BQE2"/>
<dbReference type="HOGENOM" id="CLU_002865_7_1_4"/>
<dbReference type="UniPathway" id="UPA00529">
    <property type="reaction ID" value="UER00385"/>
</dbReference>
<dbReference type="GO" id="GO:0016020">
    <property type="term" value="C:membrane"/>
    <property type="evidence" value="ECO:0007669"/>
    <property type="project" value="TreeGrafter"/>
</dbReference>
<dbReference type="GO" id="GO:0008802">
    <property type="term" value="F:betaine-aldehyde dehydrogenase (NAD+) activity"/>
    <property type="evidence" value="ECO:0007669"/>
    <property type="project" value="UniProtKB-EC"/>
</dbReference>
<dbReference type="GO" id="GO:0008812">
    <property type="term" value="F:choline dehydrogenase activity"/>
    <property type="evidence" value="ECO:0007669"/>
    <property type="project" value="UniProtKB-UniRule"/>
</dbReference>
<dbReference type="GO" id="GO:0050660">
    <property type="term" value="F:flavin adenine dinucleotide binding"/>
    <property type="evidence" value="ECO:0007669"/>
    <property type="project" value="InterPro"/>
</dbReference>
<dbReference type="GO" id="GO:0019285">
    <property type="term" value="P:glycine betaine biosynthetic process from choline"/>
    <property type="evidence" value="ECO:0007669"/>
    <property type="project" value="UniProtKB-UniRule"/>
</dbReference>
<dbReference type="Gene3D" id="3.50.50.60">
    <property type="entry name" value="FAD/NAD(P)-binding domain"/>
    <property type="match status" value="1"/>
</dbReference>
<dbReference type="Gene3D" id="3.30.560.10">
    <property type="entry name" value="Glucose Oxidase, domain 3"/>
    <property type="match status" value="1"/>
</dbReference>
<dbReference type="HAMAP" id="MF_00750">
    <property type="entry name" value="Choline_dehydrogen"/>
    <property type="match status" value="1"/>
</dbReference>
<dbReference type="InterPro" id="IPR011533">
    <property type="entry name" value="BetA"/>
</dbReference>
<dbReference type="InterPro" id="IPR036188">
    <property type="entry name" value="FAD/NAD-bd_sf"/>
</dbReference>
<dbReference type="InterPro" id="IPR012132">
    <property type="entry name" value="GMC_OxRdtase"/>
</dbReference>
<dbReference type="InterPro" id="IPR000172">
    <property type="entry name" value="GMC_OxRdtase_N"/>
</dbReference>
<dbReference type="InterPro" id="IPR007867">
    <property type="entry name" value="GMC_OxRtase_C"/>
</dbReference>
<dbReference type="NCBIfam" id="TIGR01810">
    <property type="entry name" value="betA"/>
    <property type="match status" value="1"/>
</dbReference>
<dbReference type="NCBIfam" id="NF002550">
    <property type="entry name" value="PRK02106.1"/>
    <property type="match status" value="1"/>
</dbReference>
<dbReference type="PANTHER" id="PTHR11552:SF147">
    <property type="entry name" value="CHOLINE DEHYDROGENASE, MITOCHONDRIAL"/>
    <property type="match status" value="1"/>
</dbReference>
<dbReference type="PANTHER" id="PTHR11552">
    <property type="entry name" value="GLUCOSE-METHANOL-CHOLINE GMC OXIDOREDUCTASE"/>
    <property type="match status" value="1"/>
</dbReference>
<dbReference type="Pfam" id="PF05199">
    <property type="entry name" value="GMC_oxred_C"/>
    <property type="match status" value="1"/>
</dbReference>
<dbReference type="Pfam" id="PF00732">
    <property type="entry name" value="GMC_oxred_N"/>
    <property type="match status" value="1"/>
</dbReference>
<dbReference type="PIRSF" id="PIRSF000137">
    <property type="entry name" value="Alcohol_oxidase"/>
    <property type="match status" value="1"/>
</dbReference>
<dbReference type="SUPFAM" id="SSF54373">
    <property type="entry name" value="FAD-linked reductases, C-terminal domain"/>
    <property type="match status" value="1"/>
</dbReference>
<dbReference type="SUPFAM" id="SSF51905">
    <property type="entry name" value="FAD/NAD(P)-binding domain"/>
    <property type="match status" value="1"/>
</dbReference>
<dbReference type="PROSITE" id="PS00623">
    <property type="entry name" value="GMC_OXRED_1"/>
    <property type="match status" value="1"/>
</dbReference>
<dbReference type="PROSITE" id="PS00624">
    <property type="entry name" value="GMC_OXRED_2"/>
    <property type="match status" value="1"/>
</dbReference>
<reference key="1">
    <citation type="submission" date="2006-05" db="EMBL/GenBank/DDBJ databases">
        <title>Complete sequence of chromosome 2 of Burkholderia cenocepacia AU 1054.</title>
        <authorList>
            <consortium name="US DOE Joint Genome Institute"/>
            <person name="Copeland A."/>
            <person name="Lucas S."/>
            <person name="Lapidus A."/>
            <person name="Barry K."/>
            <person name="Detter J.C."/>
            <person name="Glavina del Rio T."/>
            <person name="Hammon N."/>
            <person name="Israni S."/>
            <person name="Dalin E."/>
            <person name="Tice H."/>
            <person name="Pitluck S."/>
            <person name="Chain P."/>
            <person name="Malfatti S."/>
            <person name="Shin M."/>
            <person name="Vergez L."/>
            <person name="Schmutz J."/>
            <person name="Larimer F."/>
            <person name="Land M."/>
            <person name="Hauser L."/>
            <person name="Kyrpides N."/>
            <person name="Lykidis A."/>
            <person name="LiPuma J.J."/>
            <person name="Konstantinidis K."/>
            <person name="Tiedje J.M."/>
            <person name="Richardson P."/>
        </authorList>
    </citation>
    <scope>NUCLEOTIDE SEQUENCE [LARGE SCALE GENOMIC DNA]</scope>
    <source>
        <strain>AU 1054</strain>
    </source>
</reference>
<keyword id="KW-0274">FAD</keyword>
<keyword id="KW-0285">Flavoprotein</keyword>
<keyword id="KW-0520">NAD</keyword>
<keyword id="KW-0560">Oxidoreductase</keyword>
<evidence type="ECO:0000255" key="1">
    <source>
        <dbReference type="HAMAP-Rule" id="MF_00750"/>
    </source>
</evidence>
<evidence type="ECO:0000256" key="2">
    <source>
        <dbReference type="SAM" id="MobiDB-lite"/>
    </source>
</evidence>
<protein>
    <recommendedName>
        <fullName evidence="1">Oxygen-dependent choline dehydrogenase</fullName>
        <shortName evidence="1">CDH</shortName>
        <shortName evidence="1">CHD</shortName>
        <ecNumber evidence="1">1.1.99.1</ecNumber>
    </recommendedName>
    <alternativeName>
        <fullName evidence="1">Betaine aldehyde dehydrogenase</fullName>
        <shortName evidence="1">BADH</shortName>
        <ecNumber evidence="1">1.2.1.8</ecNumber>
    </alternativeName>
</protein>
<organism>
    <name type="scientific">Burkholderia orbicola (strain AU 1054)</name>
    <dbReference type="NCBI Taxonomy" id="331271"/>
    <lineage>
        <taxon>Bacteria</taxon>
        <taxon>Pseudomonadati</taxon>
        <taxon>Pseudomonadota</taxon>
        <taxon>Betaproteobacteria</taxon>
        <taxon>Burkholderiales</taxon>
        <taxon>Burkholderiaceae</taxon>
        <taxon>Burkholderia</taxon>
        <taxon>Burkholderia cepacia complex</taxon>
        <taxon>Burkholderia orbicola</taxon>
    </lineage>
</organism>
<comment type="function">
    <text evidence="1">Involved in the biosynthesis of the osmoprotectant glycine betaine. Catalyzes the oxidation of choline to betaine aldehyde and betaine aldehyde to glycine betaine at the same rate.</text>
</comment>
<comment type="catalytic activity">
    <reaction evidence="1">
        <text>choline + A = betaine aldehyde + AH2</text>
        <dbReference type="Rhea" id="RHEA:17433"/>
        <dbReference type="ChEBI" id="CHEBI:13193"/>
        <dbReference type="ChEBI" id="CHEBI:15354"/>
        <dbReference type="ChEBI" id="CHEBI:15710"/>
        <dbReference type="ChEBI" id="CHEBI:17499"/>
        <dbReference type="EC" id="1.1.99.1"/>
    </reaction>
</comment>
<comment type="catalytic activity">
    <reaction evidence="1">
        <text>betaine aldehyde + NAD(+) + H2O = glycine betaine + NADH + 2 H(+)</text>
        <dbReference type="Rhea" id="RHEA:15305"/>
        <dbReference type="ChEBI" id="CHEBI:15377"/>
        <dbReference type="ChEBI" id="CHEBI:15378"/>
        <dbReference type="ChEBI" id="CHEBI:15710"/>
        <dbReference type="ChEBI" id="CHEBI:17750"/>
        <dbReference type="ChEBI" id="CHEBI:57540"/>
        <dbReference type="ChEBI" id="CHEBI:57945"/>
        <dbReference type="EC" id="1.2.1.8"/>
    </reaction>
</comment>
<comment type="cofactor">
    <cofactor evidence="1">
        <name>FAD</name>
        <dbReference type="ChEBI" id="CHEBI:57692"/>
    </cofactor>
</comment>
<comment type="pathway">
    <text evidence="1">Amine and polyamine biosynthesis; betaine biosynthesis via choline pathway; betaine aldehyde from choline (cytochrome c reductase route): step 1/1.</text>
</comment>
<comment type="similarity">
    <text evidence="1">Belongs to the GMC oxidoreductase family.</text>
</comment>
<proteinExistence type="inferred from homology"/>
<accession>Q1BQE2</accession>
<gene>
    <name evidence="1" type="primary">betA</name>
    <name type="ordered locus">Bcen_3268</name>
</gene>
<sequence>MTTREYDYIICGAGSAGNVLATRLTEDPDVTVLLLEAGGPDYRFDFRTQMPAALAYPLQGRRYNWAYETDPEPHMDNRRMECGRGKGLGGSSLINGMCYIRGNALDYDNWSTHKGLENWTYLDCLPYFKKAETRDVGPNDYHGGSGPVSVTTSKPGVNPLFEAMVDAGVQAGYPRTDDLNGYQQEGFGPMDRTVTPKGRRASTARGYLDQAKVRPNLEIVTHALADRILFDGKRASGVTYLRGSERATAHARREVLVCSGAIASPQLLQRSGVGPGAWLKELDIPVVLDLPGVGQNLQDHLEMYIQYECKEPVSLYPALKWWNQPKIGLEWMLNGTGLGASNHFEAGGFIRTRDDDPWPNIQYHFLPVAINYNGSNAIEMHGFQAHVGSMRSPSRGRVKLRSRDPNDHPSILFNYMAEALDWREFRDAIRATREIMRQPALDRYRGRELNPGADCKSDKELDAFVRARAETAFHPSCSCKMGYDDMAVVDEEGRVHGLDGLRVVDASIMPIITTGNLNAPTIMIAEKIADKIRGRTPLARVDVPYFVANGAPARNVAKAVRQPETV</sequence>
<name>BETA_BURO1</name>